<keyword id="KW-1185">Reference proteome</keyword>
<keyword id="KW-0687">Ribonucleoprotein</keyword>
<keyword id="KW-0689">Ribosomal protein</keyword>
<keyword id="KW-0694">RNA-binding</keyword>
<keyword id="KW-0699">rRNA-binding</keyword>
<keyword id="KW-0820">tRNA-binding</keyword>
<proteinExistence type="inferred from homology"/>
<feature type="chain" id="PRO_0000132131" description="Small ribosomal subunit protein uS13">
    <location>
        <begin position="1"/>
        <end position="118"/>
    </location>
</feature>
<feature type="region of interest" description="Disordered" evidence="2">
    <location>
        <begin position="94"/>
        <end position="118"/>
    </location>
</feature>
<reference key="1">
    <citation type="journal article" date="2002" name="Nat. Biotechnol.">
        <title>Genome sequence of the dissimilatory metal ion-reducing bacterium Shewanella oneidensis.</title>
        <authorList>
            <person name="Heidelberg J.F."/>
            <person name="Paulsen I.T."/>
            <person name="Nelson K.E."/>
            <person name="Gaidos E.J."/>
            <person name="Nelson W.C."/>
            <person name="Read T.D."/>
            <person name="Eisen J.A."/>
            <person name="Seshadri R."/>
            <person name="Ward N.L."/>
            <person name="Methe B.A."/>
            <person name="Clayton R.A."/>
            <person name="Meyer T."/>
            <person name="Tsapin A."/>
            <person name="Scott J."/>
            <person name="Beanan M.J."/>
            <person name="Brinkac L.M."/>
            <person name="Daugherty S.C."/>
            <person name="DeBoy R.T."/>
            <person name="Dodson R.J."/>
            <person name="Durkin A.S."/>
            <person name="Haft D.H."/>
            <person name="Kolonay J.F."/>
            <person name="Madupu R."/>
            <person name="Peterson J.D."/>
            <person name="Umayam L.A."/>
            <person name="White O."/>
            <person name="Wolf A.M."/>
            <person name="Vamathevan J.J."/>
            <person name="Weidman J.F."/>
            <person name="Impraim M."/>
            <person name="Lee K."/>
            <person name="Berry K.J."/>
            <person name="Lee C."/>
            <person name="Mueller J."/>
            <person name="Khouri H.M."/>
            <person name="Gill J."/>
            <person name="Utterback T.R."/>
            <person name="McDonald L.A."/>
            <person name="Feldblyum T.V."/>
            <person name="Smith H.O."/>
            <person name="Venter J.C."/>
            <person name="Nealson K.H."/>
            <person name="Fraser C.M."/>
        </authorList>
    </citation>
    <scope>NUCLEOTIDE SEQUENCE [LARGE SCALE GENOMIC DNA]</scope>
    <source>
        <strain>ATCC 700550 / JCM 31522 / CIP 106686 / LMG 19005 / NCIMB 14063 / MR-1</strain>
    </source>
</reference>
<protein>
    <recommendedName>
        <fullName evidence="1">Small ribosomal subunit protein uS13</fullName>
    </recommendedName>
    <alternativeName>
        <fullName evidence="3">30S ribosomal protein S13</fullName>
    </alternativeName>
</protein>
<organism>
    <name type="scientific">Shewanella oneidensis (strain ATCC 700550 / JCM 31522 / CIP 106686 / LMG 19005 / NCIMB 14063 / MR-1)</name>
    <dbReference type="NCBI Taxonomy" id="211586"/>
    <lineage>
        <taxon>Bacteria</taxon>
        <taxon>Pseudomonadati</taxon>
        <taxon>Pseudomonadota</taxon>
        <taxon>Gammaproteobacteria</taxon>
        <taxon>Alteromonadales</taxon>
        <taxon>Shewanellaceae</taxon>
        <taxon>Shewanella</taxon>
    </lineage>
</organism>
<dbReference type="EMBL" id="AE014299">
    <property type="protein sequence ID" value="AAN53338.1"/>
    <property type="molecule type" value="Genomic_DNA"/>
</dbReference>
<dbReference type="RefSeq" id="NP_715893.1">
    <property type="nucleotide sequence ID" value="NC_004347.2"/>
</dbReference>
<dbReference type="RefSeq" id="WP_011070630.1">
    <property type="nucleotide sequence ID" value="NZ_CP053946.1"/>
</dbReference>
<dbReference type="SMR" id="Q8EK48"/>
<dbReference type="STRING" id="211586.SO_0253"/>
<dbReference type="PaxDb" id="211586-SO_0253"/>
<dbReference type="GeneID" id="94726208"/>
<dbReference type="KEGG" id="son:SO_0253"/>
<dbReference type="PATRIC" id="fig|211586.12.peg.241"/>
<dbReference type="eggNOG" id="COG0099">
    <property type="taxonomic scope" value="Bacteria"/>
</dbReference>
<dbReference type="HOGENOM" id="CLU_103849_1_2_6"/>
<dbReference type="OrthoDB" id="9803610at2"/>
<dbReference type="PhylomeDB" id="Q8EK48"/>
<dbReference type="BioCyc" id="SONE211586:G1GMP-242-MONOMER"/>
<dbReference type="Proteomes" id="UP000008186">
    <property type="component" value="Chromosome"/>
</dbReference>
<dbReference type="GO" id="GO:0005829">
    <property type="term" value="C:cytosol"/>
    <property type="evidence" value="ECO:0000318"/>
    <property type="project" value="GO_Central"/>
</dbReference>
<dbReference type="GO" id="GO:0015935">
    <property type="term" value="C:small ribosomal subunit"/>
    <property type="evidence" value="ECO:0000318"/>
    <property type="project" value="GO_Central"/>
</dbReference>
<dbReference type="GO" id="GO:0019843">
    <property type="term" value="F:rRNA binding"/>
    <property type="evidence" value="ECO:0007669"/>
    <property type="project" value="UniProtKB-UniRule"/>
</dbReference>
<dbReference type="GO" id="GO:0003735">
    <property type="term" value="F:structural constituent of ribosome"/>
    <property type="evidence" value="ECO:0007669"/>
    <property type="project" value="InterPro"/>
</dbReference>
<dbReference type="GO" id="GO:0000049">
    <property type="term" value="F:tRNA binding"/>
    <property type="evidence" value="ECO:0007669"/>
    <property type="project" value="UniProtKB-UniRule"/>
</dbReference>
<dbReference type="GO" id="GO:0006412">
    <property type="term" value="P:translation"/>
    <property type="evidence" value="ECO:0007669"/>
    <property type="project" value="UniProtKB-UniRule"/>
</dbReference>
<dbReference type="FunFam" id="1.10.8.50:FF:000001">
    <property type="entry name" value="30S ribosomal protein S13"/>
    <property type="match status" value="1"/>
</dbReference>
<dbReference type="FunFam" id="4.10.910.10:FF:000001">
    <property type="entry name" value="30S ribosomal protein S13"/>
    <property type="match status" value="1"/>
</dbReference>
<dbReference type="Gene3D" id="1.10.8.50">
    <property type="match status" value="1"/>
</dbReference>
<dbReference type="Gene3D" id="4.10.910.10">
    <property type="entry name" value="30s ribosomal protein s13, domain 2"/>
    <property type="match status" value="1"/>
</dbReference>
<dbReference type="HAMAP" id="MF_01315">
    <property type="entry name" value="Ribosomal_uS13"/>
    <property type="match status" value="1"/>
</dbReference>
<dbReference type="InterPro" id="IPR027437">
    <property type="entry name" value="Rbsml_uS13_C"/>
</dbReference>
<dbReference type="InterPro" id="IPR001892">
    <property type="entry name" value="Ribosomal_uS13"/>
</dbReference>
<dbReference type="InterPro" id="IPR010979">
    <property type="entry name" value="Ribosomal_uS13-like_H2TH"/>
</dbReference>
<dbReference type="InterPro" id="IPR019980">
    <property type="entry name" value="Ribosomal_uS13_bac-type"/>
</dbReference>
<dbReference type="InterPro" id="IPR018269">
    <property type="entry name" value="Ribosomal_uS13_CS"/>
</dbReference>
<dbReference type="NCBIfam" id="TIGR03631">
    <property type="entry name" value="uS13_bact"/>
    <property type="match status" value="1"/>
</dbReference>
<dbReference type="PANTHER" id="PTHR10871">
    <property type="entry name" value="30S RIBOSOMAL PROTEIN S13/40S RIBOSOMAL PROTEIN S18"/>
    <property type="match status" value="1"/>
</dbReference>
<dbReference type="PANTHER" id="PTHR10871:SF1">
    <property type="entry name" value="SMALL RIBOSOMAL SUBUNIT PROTEIN US13M"/>
    <property type="match status" value="1"/>
</dbReference>
<dbReference type="Pfam" id="PF00416">
    <property type="entry name" value="Ribosomal_S13"/>
    <property type="match status" value="1"/>
</dbReference>
<dbReference type="PIRSF" id="PIRSF002134">
    <property type="entry name" value="Ribosomal_S13"/>
    <property type="match status" value="1"/>
</dbReference>
<dbReference type="SUPFAM" id="SSF46946">
    <property type="entry name" value="S13-like H2TH domain"/>
    <property type="match status" value="1"/>
</dbReference>
<dbReference type="PROSITE" id="PS00646">
    <property type="entry name" value="RIBOSOMAL_S13_1"/>
    <property type="match status" value="1"/>
</dbReference>
<dbReference type="PROSITE" id="PS50159">
    <property type="entry name" value="RIBOSOMAL_S13_2"/>
    <property type="match status" value="1"/>
</dbReference>
<accession>Q8EK48</accession>
<comment type="function">
    <text evidence="1">Located at the top of the head of the 30S subunit, it contacts several helices of the 16S rRNA. In the 70S ribosome it contacts the 23S rRNA (bridge B1a) and protein L5 of the 50S subunit (bridge B1b), connecting the 2 subunits; these bridges are implicated in subunit movement. Contacts the tRNAs in the A and P-sites.</text>
</comment>
<comment type="subunit">
    <text evidence="1">Part of the 30S ribosomal subunit. Forms a loose heterodimer with protein S19. Forms two bridges to the 50S subunit in the 70S ribosome.</text>
</comment>
<comment type="similarity">
    <text evidence="1">Belongs to the universal ribosomal protein uS13 family.</text>
</comment>
<evidence type="ECO:0000255" key="1">
    <source>
        <dbReference type="HAMAP-Rule" id="MF_01315"/>
    </source>
</evidence>
<evidence type="ECO:0000256" key="2">
    <source>
        <dbReference type="SAM" id="MobiDB-lite"/>
    </source>
</evidence>
<evidence type="ECO:0000305" key="3"/>
<sequence length="118" mass="13321">MARIAGINIPDQKHTVIALTAIFGIGRTRARAICAATSIAETAKIKELSEAQIDTLREEVAKYLVEGDLRREISMNIKRLMDLGCYRGLRHRRSLPLRGQRTKTNARTRKGPRKPIKK</sequence>
<name>RS13_SHEON</name>
<gene>
    <name evidence="1" type="primary">rpsM</name>
    <name type="ordered locus">SO_0253</name>
</gene>